<name>ANGE2_BOVIN</name>
<protein>
    <recommendedName>
        <fullName>Protein angel homolog 2</fullName>
    </recommendedName>
</protein>
<dbReference type="EMBL" id="BC146257">
    <property type="protein sequence ID" value="AAI46258.1"/>
    <property type="molecule type" value="mRNA"/>
</dbReference>
<dbReference type="RefSeq" id="NP_001092580.1">
    <property type="nucleotide sequence ID" value="NM_001099110.1"/>
</dbReference>
<dbReference type="SMR" id="A6H7I3"/>
<dbReference type="FunCoup" id="A6H7I3">
    <property type="interactions" value="4411"/>
</dbReference>
<dbReference type="STRING" id="9913.ENSBTAP00000004825"/>
<dbReference type="PaxDb" id="9913-ENSBTAP00000004825"/>
<dbReference type="GeneID" id="540507"/>
<dbReference type="KEGG" id="bta:540507"/>
<dbReference type="CTD" id="90806"/>
<dbReference type="VEuPathDB" id="HostDB:ENSBTAG00000003702"/>
<dbReference type="eggNOG" id="KOG0620">
    <property type="taxonomic scope" value="Eukaryota"/>
</dbReference>
<dbReference type="eggNOG" id="KOG2338">
    <property type="taxonomic scope" value="Eukaryota"/>
</dbReference>
<dbReference type="HOGENOM" id="CLU_016428_0_2_1"/>
<dbReference type="InParanoid" id="A6H7I3"/>
<dbReference type="OMA" id="WRPPQFC"/>
<dbReference type="OrthoDB" id="10253982at2759"/>
<dbReference type="TreeFam" id="TF316126"/>
<dbReference type="Proteomes" id="UP000009136">
    <property type="component" value="Chromosome 16"/>
</dbReference>
<dbReference type="Bgee" id="ENSBTAG00000003702">
    <property type="expression patterns" value="Expressed in oocyte and 111 other cell types or tissues"/>
</dbReference>
<dbReference type="GO" id="GO:0003824">
    <property type="term" value="F:catalytic activity"/>
    <property type="evidence" value="ECO:0007669"/>
    <property type="project" value="InterPro"/>
</dbReference>
<dbReference type="GO" id="GO:0003730">
    <property type="term" value="F:mRNA 3'-UTR binding"/>
    <property type="evidence" value="ECO:0000318"/>
    <property type="project" value="GO_Central"/>
</dbReference>
<dbReference type="GO" id="GO:0070935">
    <property type="term" value="P:3'-UTR-mediated mRNA stabilization"/>
    <property type="evidence" value="ECO:0000318"/>
    <property type="project" value="GO_Central"/>
</dbReference>
<dbReference type="Gene3D" id="3.60.10.10">
    <property type="entry name" value="Endonuclease/exonuclease/phosphatase"/>
    <property type="match status" value="1"/>
</dbReference>
<dbReference type="InterPro" id="IPR045816">
    <property type="entry name" value="ANGEL2_N"/>
</dbReference>
<dbReference type="InterPro" id="IPR050410">
    <property type="entry name" value="CCR4/nocturin_mRNA_transcr"/>
</dbReference>
<dbReference type="InterPro" id="IPR036691">
    <property type="entry name" value="Endo/exonu/phosph_ase_sf"/>
</dbReference>
<dbReference type="InterPro" id="IPR005135">
    <property type="entry name" value="Endo/exonuclease/phosphatase"/>
</dbReference>
<dbReference type="PANTHER" id="PTHR12121">
    <property type="entry name" value="CARBON CATABOLITE REPRESSOR PROTEIN 4"/>
    <property type="match status" value="1"/>
</dbReference>
<dbReference type="PANTHER" id="PTHR12121:SF27">
    <property type="entry name" value="PROTEIN ANGEL HOMOLOG 2"/>
    <property type="match status" value="1"/>
</dbReference>
<dbReference type="Pfam" id="PF19339">
    <property type="entry name" value="ANGEL2_N"/>
    <property type="match status" value="2"/>
</dbReference>
<dbReference type="Pfam" id="PF03372">
    <property type="entry name" value="Exo_endo_phos"/>
    <property type="match status" value="1"/>
</dbReference>
<dbReference type="SUPFAM" id="SSF56219">
    <property type="entry name" value="DNase I-like"/>
    <property type="match status" value="1"/>
</dbReference>
<reference key="1">
    <citation type="submission" date="2007-06" db="EMBL/GenBank/DDBJ databases">
        <authorList>
            <consortium name="NIH - Mammalian Gene Collection (MGC) project"/>
        </authorList>
    </citation>
    <scope>NUCLEOTIDE SEQUENCE [LARGE SCALE MRNA]</scope>
    <source>
        <strain>Hereford</strain>
        <tissue>Fetal skin</tissue>
    </source>
</reference>
<feature type="chain" id="PRO_0000305079" description="Protein angel homolog 2">
    <location>
        <begin position="1"/>
        <end position="544"/>
    </location>
</feature>
<proteinExistence type="evidence at transcript level"/>
<comment type="similarity">
    <text evidence="1">Belongs to the CCR4/nocturin family.</text>
</comment>
<evidence type="ECO:0000305" key="1"/>
<gene>
    <name type="primary">ANGEL2</name>
</gene>
<accession>A6H7I3</accession>
<organism>
    <name type="scientific">Bos taurus</name>
    <name type="common">Bovine</name>
    <dbReference type="NCBI Taxonomy" id="9913"/>
    <lineage>
        <taxon>Eukaryota</taxon>
        <taxon>Metazoa</taxon>
        <taxon>Chordata</taxon>
        <taxon>Craniata</taxon>
        <taxon>Vertebrata</taxon>
        <taxon>Euteleostomi</taxon>
        <taxon>Mammalia</taxon>
        <taxon>Eutheria</taxon>
        <taxon>Laurasiatheria</taxon>
        <taxon>Artiodactyla</taxon>
        <taxon>Ruminantia</taxon>
        <taxon>Pecora</taxon>
        <taxon>Bovidae</taxon>
        <taxon>Bovinae</taxon>
        <taxon>Bos</taxon>
    </lineage>
</organism>
<sequence length="544" mass="62348">MEAWRCVRRGYGRCVVGRGRYPMLPHHQKSLGRDWTTPWENLQKCCWNRHISSCMRWPGHYSRAPYPYFSSRHFSLNWRPPGLFESRAPFQYWNWRPDSLSQTSLFHLSSYIMNSEGDEPSSKRRKHQGTIQRHWEYICNHNKENTKILGDENVDPICEDSENKFEFSVMSYNILSQDLLEDNSHLYKHCRRPVLHWSFRFPNILKEIKHFDADVLCLQEVQEDHYGTEIRPSLESLGYHCEYKMRTGRKPDGCAICFKHSKFSLLSVNPVEFYRRDVPLLDRDNVGLVLLLQPKIPSATSPAICVANTHLLYNPRRGDIKLTQLAMLLAEISSVAHQKDGRFCPIVMCGDFNSVPGSPLYSFIKEGKLNYEGLAIGKVSGQEQSSRGQRILSIPIWPPNLGISQNCVYEVQQVPKVEKPDGDLTQPELDKTEVLVTAEKLSSNLQHHFSLSSVYSHYLPDTGIPEVTTCHSRSAVTVDYIFYSAEKEGVAEQPGAEVALVGGLKLLARLSLLTEQDLWTVNGLPNENNSSDHLPLLAKFRLEL</sequence>
<keyword id="KW-1185">Reference proteome</keyword>